<sequence>MIPTYMNIMLAFTISLLGMLTYRSHLVASLLCLEGMMMSLFIMATLMASNTHFPLINIMPIILLVFAACEAAVGLALLISISNTYGLDYIHNLNLLQC</sequence>
<keyword id="KW-0249">Electron transport</keyword>
<keyword id="KW-0472">Membrane</keyword>
<keyword id="KW-0496">Mitochondrion</keyword>
<keyword id="KW-0999">Mitochondrion inner membrane</keyword>
<keyword id="KW-0520">NAD</keyword>
<keyword id="KW-0679">Respiratory chain</keyword>
<keyword id="KW-1278">Translocase</keyword>
<keyword id="KW-0812">Transmembrane</keyword>
<keyword id="KW-1133">Transmembrane helix</keyword>
<keyword id="KW-0813">Transport</keyword>
<keyword id="KW-0830">Ubiquinone</keyword>
<geneLocation type="mitochondrion"/>
<organism>
    <name type="scientific">Macaca nigrescens</name>
    <name type="common">Gorontalo macaque</name>
    <name type="synonym">Macaca nigra nigrescens</name>
    <dbReference type="NCBI Taxonomy" id="90384"/>
    <lineage>
        <taxon>Eukaryota</taxon>
        <taxon>Metazoa</taxon>
        <taxon>Chordata</taxon>
        <taxon>Craniata</taxon>
        <taxon>Vertebrata</taxon>
        <taxon>Euteleostomi</taxon>
        <taxon>Mammalia</taxon>
        <taxon>Eutheria</taxon>
        <taxon>Euarchontoglires</taxon>
        <taxon>Primates</taxon>
        <taxon>Haplorrhini</taxon>
        <taxon>Catarrhini</taxon>
        <taxon>Cercopithecidae</taxon>
        <taxon>Cercopithecinae</taxon>
        <taxon>Macaca</taxon>
    </lineage>
</organism>
<gene>
    <name type="primary">MT-ND4L</name>
    <name type="synonym">MTND4L</name>
    <name type="synonym">NADH4L</name>
    <name type="synonym">ND4L</name>
</gene>
<dbReference type="EC" id="7.1.1.2"/>
<dbReference type="EMBL" id="AF091410">
    <property type="protein sequence ID" value="AAD24708.1"/>
    <property type="molecule type" value="Genomic_DNA"/>
</dbReference>
<dbReference type="SMR" id="Q9XL48"/>
<dbReference type="GO" id="GO:0005743">
    <property type="term" value="C:mitochondrial inner membrane"/>
    <property type="evidence" value="ECO:0000250"/>
    <property type="project" value="UniProtKB"/>
</dbReference>
<dbReference type="GO" id="GO:0045271">
    <property type="term" value="C:respiratory chain complex I"/>
    <property type="evidence" value="ECO:0000250"/>
    <property type="project" value="UniProtKB"/>
</dbReference>
<dbReference type="GO" id="GO:0008137">
    <property type="term" value="F:NADH dehydrogenase (ubiquinone) activity"/>
    <property type="evidence" value="ECO:0000250"/>
    <property type="project" value="UniProtKB"/>
</dbReference>
<dbReference type="GO" id="GO:0042773">
    <property type="term" value="P:ATP synthesis coupled electron transport"/>
    <property type="evidence" value="ECO:0007669"/>
    <property type="project" value="InterPro"/>
</dbReference>
<dbReference type="FunFam" id="1.10.287.3510:FF:000002">
    <property type="entry name" value="NADH-ubiquinone oxidoreductase chain 4L"/>
    <property type="match status" value="1"/>
</dbReference>
<dbReference type="Gene3D" id="1.10.287.3510">
    <property type="match status" value="1"/>
</dbReference>
<dbReference type="InterPro" id="IPR001133">
    <property type="entry name" value="NADH_UbQ_OxRdtase_chain4L/K"/>
</dbReference>
<dbReference type="InterPro" id="IPR039428">
    <property type="entry name" value="NUOK/Mnh_C1-like"/>
</dbReference>
<dbReference type="PANTHER" id="PTHR11434:SF0">
    <property type="entry name" value="NADH-UBIQUINONE OXIDOREDUCTASE CHAIN 4L"/>
    <property type="match status" value="1"/>
</dbReference>
<dbReference type="PANTHER" id="PTHR11434">
    <property type="entry name" value="NADH-UBIQUINONE OXIDOREDUCTASE SUBUNIT ND4L"/>
    <property type="match status" value="1"/>
</dbReference>
<dbReference type="Pfam" id="PF00420">
    <property type="entry name" value="Oxidored_q2"/>
    <property type="match status" value="1"/>
</dbReference>
<name>NU4LM_MACNR</name>
<reference key="1">
    <citation type="journal article" date="1999" name="Biol. J. Linn. Soc. Lond.">
        <title>Origin of the Sulawesi macaques (Cercopithecidae: Macaca) as suggested by mitochondrial DNA phylogeny.</title>
        <authorList>
            <person name="Evans B.J."/>
            <person name="Morales J.C."/>
            <person name="Supriatna J."/>
            <person name="Melnick D.J."/>
        </authorList>
    </citation>
    <scope>NUCLEOTIDE SEQUENCE [GENOMIC DNA]</scope>
</reference>
<accession>Q9XL48</accession>
<feature type="chain" id="PRO_0000118442" description="NADH-ubiquinone oxidoreductase chain 4L">
    <location>
        <begin position="1"/>
        <end position="98"/>
    </location>
</feature>
<feature type="transmembrane region" description="Helical" evidence="3">
    <location>
        <begin position="26"/>
        <end position="46"/>
    </location>
</feature>
<feature type="transmembrane region" description="Helical" evidence="3">
    <location>
        <begin position="61"/>
        <end position="81"/>
    </location>
</feature>
<comment type="function">
    <text evidence="1">Core subunit of the mitochondrial membrane respiratory chain NADH dehydrogenase (Complex I) which catalyzes electron transfer from NADH through the respiratory chain, using ubiquinone as an electron acceptor. Part of the enzyme membrane arm which is embedded in the lipid bilayer and involved in proton translocation.</text>
</comment>
<comment type="catalytic activity">
    <reaction evidence="1">
        <text>a ubiquinone + NADH + 5 H(+)(in) = a ubiquinol + NAD(+) + 4 H(+)(out)</text>
        <dbReference type="Rhea" id="RHEA:29091"/>
        <dbReference type="Rhea" id="RHEA-COMP:9565"/>
        <dbReference type="Rhea" id="RHEA-COMP:9566"/>
        <dbReference type="ChEBI" id="CHEBI:15378"/>
        <dbReference type="ChEBI" id="CHEBI:16389"/>
        <dbReference type="ChEBI" id="CHEBI:17976"/>
        <dbReference type="ChEBI" id="CHEBI:57540"/>
        <dbReference type="ChEBI" id="CHEBI:57945"/>
        <dbReference type="EC" id="7.1.1.2"/>
    </reaction>
    <physiologicalReaction direction="left-to-right" evidence="1">
        <dbReference type="Rhea" id="RHEA:29092"/>
    </physiologicalReaction>
</comment>
<comment type="subunit">
    <text evidence="2">Core subunit of respiratory chain NADH dehydrogenase (Complex I) which is composed of 45 different subunits.</text>
</comment>
<comment type="subcellular location">
    <subcellularLocation>
        <location evidence="2">Mitochondrion inner membrane</location>
        <topology evidence="3">Multi-pass membrane protein</topology>
    </subcellularLocation>
</comment>
<comment type="similarity">
    <text evidence="4">Belongs to the complex I subunit 4L family.</text>
</comment>
<protein>
    <recommendedName>
        <fullName>NADH-ubiquinone oxidoreductase chain 4L</fullName>
        <ecNumber>7.1.1.2</ecNumber>
    </recommendedName>
    <alternativeName>
        <fullName>NADH dehydrogenase subunit 4L</fullName>
    </alternativeName>
</protein>
<evidence type="ECO:0000250" key="1">
    <source>
        <dbReference type="UniProtKB" id="P03901"/>
    </source>
</evidence>
<evidence type="ECO:0000250" key="2">
    <source>
        <dbReference type="UniProtKB" id="P03902"/>
    </source>
</evidence>
<evidence type="ECO:0000255" key="3"/>
<evidence type="ECO:0000305" key="4"/>
<proteinExistence type="inferred from homology"/>